<reference key="1">
    <citation type="journal article" date="2000" name="Nature">
        <title>DNA sequence of both chromosomes of the cholera pathogen Vibrio cholerae.</title>
        <authorList>
            <person name="Heidelberg J.F."/>
            <person name="Eisen J.A."/>
            <person name="Nelson W.C."/>
            <person name="Clayton R.A."/>
            <person name="Gwinn M.L."/>
            <person name="Dodson R.J."/>
            <person name="Haft D.H."/>
            <person name="Hickey E.K."/>
            <person name="Peterson J.D."/>
            <person name="Umayam L.A."/>
            <person name="Gill S.R."/>
            <person name="Nelson K.E."/>
            <person name="Read T.D."/>
            <person name="Tettelin H."/>
            <person name="Richardson D.L."/>
            <person name="Ermolaeva M.D."/>
            <person name="Vamathevan J.J."/>
            <person name="Bass S."/>
            <person name="Qin H."/>
            <person name="Dragoi I."/>
            <person name="Sellers P."/>
            <person name="McDonald L.A."/>
            <person name="Utterback T.R."/>
            <person name="Fleischmann R.D."/>
            <person name="Nierman W.C."/>
            <person name="White O."/>
            <person name="Salzberg S.L."/>
            <person name="Smith H.O."/>
            <person name="Colwell R.R."/>
            <person name="Mekalanos J.J."/>
            <person name="Venter J.C."/>
            <person name="Fraser C.M."/>
        </authorList>
    </citation>
    <scope>NUCLEOTIDE SEQUENCE [LARGE SCALE GENOMIC DNA]</scope>
    <source>
        <strain>ATCC 39315 / El Tor Inaba N16961</strain>
    </source>
</reference>
<name>TRPD_VIBCH</name>
<keyword id="KW-0028">Amino-acid biosynthesis</keyword>
<keyword id="KW-0057">Aromatic amino acid biosynthesis</keyword>
<keyword id="KW-0328">Glycosyltransferase</keyword>
<keyword id="KW-0460">Magnesium</keyword>
<keyword id="KW-0479">Metal-binding</keyword>
<keyword id="KW-1185">Reference proteome</keyword>
<keyword id="KW-0808">Transferase</keyword>
<keyword id="KW-0822">Tryptophan biosynthesis</keyword>
<sequence>MQTIINKLYEQQGLTQAESQQLFDQIIRGEMDPVLMAAVLTALKIKGETPDEIAGAAKALLANANPFPRPDYDFADIVGTGGDGSNTINISTTAAFVAAACGVKVAKHGNRGVSSKSGSSDLLSSFGINLAMSAQDSRQALDDLGVAFLFAPQYHGGVRHAMPVRQTMKTRTIFNILGPLINPARPNIELMGVYSKDLVRPIAQTMLQMGLKRAAVVHGSGLDEVAIHGETQVAEIRQGELIEYTLTPEDFGVSRYPLDAIRGGEPEENRAIITQILTGNGTAAQMAAVAVNVALLLRLFGQEDLKANTQQAIAVMKSGQAYGLVQQLAQRG</sequence>
<comment type="function">
    <text evidence="1">Catalyzes the transfer of the phosphoribosyl group of 5-phosphorylribose-1-pyrophosphate (PRPP) to anthranilate to yield N-(5'-phosphoribosyl)-anthranilate (PRA).</text>
</comment>
<comment type="catalytic activity">
    <reaction evidence="1">
        <text>N-(5-phospho-beta-D-ribosyl)anthranilate + diphosphate = 5-phospho-alpha-D-ribose 1-diphosphate + anthranilate</text>
        <dbReference type="Rhea" id="RHEA:11768"/>
        <dbReference type="ChEBI" id="CHEBI:16567"/>
        <dbReference type="ChEBI" id="CHEBI:18277"/>
        <dbReference type="ChEBI" id="CHEBI:33019"/>
        <dbReference type="ChEBI" id="CHEBI:58017"/>
        <dbReference type="EC" id="2.4.2.18"/>
    </reaction>
</comment>
<comment type="cofactor">
    <cofactor evidence="1">
        <name>Mg(2+)</name>
        <dbReference type="ChEBI" id="CHEBI:18420"/>
    </cofactor>
    <text evidence="1">Binds 2 magnesium ions per monomer.</text>
</comment>
<comment type="pathway">
    <text evidence="1">Amino-acid biosynthesis; L-tryptophan biosynthesis; L-tryptophan from chorismate: step 2/5.</text>
</comment>
<comment type="subunit">
    <text evidence="1">Homodimer.</text>
</comment>
<comment type="similarity">
    <text evidence="1">Belongs to the anthranilate phosphoribosyltransferase family.</text>
</comment>
<comment type="sequence caution" evidence="2">
    <conflict type="erroneous initiation">
        <sequence resource="EMBL-CDS" id="AAF94331"/>
    </conflict>
    <text>Extended N-terminus.</text>
</comment>
<evidence type="ECO:0000255" key="1">
    <source>
        <dbReference type="HAMAP-Rule" id="MF_00211"/>
    </source>
</evidence>
<evidence type="ECO:0000305" key="2"/>
<gene>
    <name evidence="1" type="primary">trpD</name>
    <name type="ordered locus">VC_1172</name>
</gene>
<organism>
    <name type="scientific">Vibrio cholerae serotype O1 (strain ATCC 39315 / El Tor Inaba N16961)</name>
    <dbReference type="NCBI Taxonomy" id="243277"/>
    <lineage>
        <taxon>Bacteria</taxon>
        <taxon>Pseudomonadati</taxon>
        <taxon>Pseudomonadota</taxon>
        <taxon>Gammaproteobacteria</taxon>
        <taxon>Vibrionales</taxon>
        <taxon>Vibrionaceae</taxon>
        <taxon>Vibrio</taxon>
    </lineage>
</organism>
<protein>
    <recommendedName>
        <fullName evidence="1">Anthranilate phosphoribosyltransferase</fullName>
        <ecNumber evidence="1">2.4.2.18</ecNumber>
    </recommendedName>
</protein>
<feature type="chain" id="PRO_0000154498" description="Anthranilate phosphoribosyltransferase">
    <location>
        <begin position="1"/>
        <end position="332"/>
    </location>
</feature>
<feature type="binding site" evidence="1">
    <location>
        <position position="79"/>
    </location>
    <ligand>
        <name>5-phospho-alpha-D-ribose 1-diphosphate</name>
        <dbReference type="ChEBI" id="CHEBI:58017"/>
    </ligand>
</feature>
<feature type="binding site" evidence="1">
    <location>
        <position position="79"/>
    </location>
    <ligand>
        <name>anthranilate</name>
        <dbReference type="ChEBI" id="CHEBI:16567"/>
        <label>1</label>
    </ligand>
</feature>
<feature type="binding site" evidence="1">
    <location>
        <begin position="82"/>
        <end position="83"/>
    </location>
    <ligand>
        <name>5-phospho-alpha-D-ribose 1-diphosphate</name>
        <dbReference type="ChEBI" id="CHEBI:58017"/>
    </ligand>
</feature>
<feature type="binding site" evidence="1">
    <location>
        <position position="87"/>
    </location>
    <ligand>
        <name>5-phospho-alpha-D-ribose 1-diphosphate</name>
        <dbReference type="ChEBI" id="CHEBI:58017"/>
    </ligand>
</feature>
<feature type="binding site" evidence="1">
    <location>
        <begin position="89"/>
        <end position="92"/>
    </location>
    <ligand>
        <name>5-phospho-alpha-D-ribose 1-diphosphate</name>
        <dbReference type="ChEBI" id="CHEBI:58017"/>
    </ligand>
</feature>
<feature type="binding site" evidence="1">
    <location>
        <position position="91"/>
    </location>
    <ligand>
        <name>Mg(2+)</name>
        <dbReference type="ChEBI" id="CHEBI:18420"/>
        <label>1</label>
    </ligand>
</feature>
<feature type="binding site" evidence="1">
    <location>
        <begin position="107"/>
        <end position="115"/>
    </location>
    <ligand>
        <name>5-phospho-alpha-D-ribose 1-diphosphate</name>
        <dbReference type="ChEBI" id="CHEBI:58017"/>
    </ligand>
</feature>
<feature type="binding site" evidence="1">
    <location>
        <position position="110"/>
    </location>
    <ligand>
        <name>anthranilate</name>
        <dbReference type="ChEBI" id="CHEBI:16567"/>
        <label>1</label>
    </ligand>
</feature>
<feature type="binding site" evidence="1">
    <location>
        <position position="119"/>
    </location>
    <ligand>
        <name>5-phospho-alpha-D-ribose 1-diphosphate</name>
        <dbReference type="ChEBI" id="CHEBI:58017"/>
    </ligand>
</feature>
<feature type="binding site" evidence="1">
    <location>
        <position position="165"/>
    </location>
    <ligand>
        <name>anthranilate</name>
        <dbReference type="ChEBI" id="CHEBI:16567"/>
        <label>2</label>
    </ligand>
</feature>
<feature type="binding site" evidence="1">
    <location>
        <position position="223"/>
    </location>
    <ligand>
        <name>Mg(2+)</name>
        <dbReference type="ChEBI" id="CHEBI:18420"/>
        <label>2</label>
    </ligand>
</feature>
<feature type="binding site" evidence="1">
    <location>
        <position position="224"/>
    </location>
    <ligand>
        <name>Mg(2+)</name>
        <dbReference type="ChEBI" id="CHEBI:18420"/>
        <label>1</label>
    </ligand>
</feature>
<feature type="binding site" evidence="1">
    <location>
        <position position="224"/>
    </location>
    <ligand>
        <name>Mg(2+)</name>
        <dbReference type="ChEBI" id="CHEBI:18420"/>
        <label>2</label>
    </ligand>
</feature>
<dbReference type="EC" id="2.4.2.18" evidence="1"/>
<dbReference type="EMBL" id="AE003852">
    <property type="protein sequence ID" value="AAF94331.1"/>
    <property type="status" value="ALT_INIT"/>
    <property type="molecule type" value="Genomic_DNA"/>
</dbReference>
<dbReference type="PIR" id="G82232">
    <property type="entry name" value="G82232"/>
</dbReference>
<dbReference type="RefSeq" id="NP_230817.2">
    <property type="nucleotide sequence ID" value="NC_002505.1"/>
</dbReference>
<dbReference type="RefSeq" id="WP_001193364.1">
    <property type="nucleotide sequence ID" value="NZ_LT906614.1"/>
</dbReference>
<dbReference type="SMR" id="Q9KST4"/>
<dbReference type="STRING" id="243277.VC_1172"/>
<dbReference type="DNASU" id="2614605"/>
<dbReference type="EnsemblBacteria" id="AAF94331">
    <property type="protein sequence ID" value="AAF94331"/>
    <property type="gene ID" value="VC_1172"/>
</dbReference>
<dbReference type="KEGG" id="vch:VC_1172"/>
<dbReference type="PATRIC" id="fig|243277.26.peg.1121"/>
<dbReference type="eggNOG" id="COG0547">
    <property type="taxonomic scope" value="Bacteria"/>
</dbReference>
<dbReference type="HOGENOM" id="CLU_034315_3_0_6"/>
<dbReference type="UniPathway" id="UPA00035">
    <property type="reaction ID" value="UER00041"/>
</dbReference>
<dbReference type="Proteomes" id="UP000000584">
    <property type="component" value="Chromosome 1"/>
</dbReference>
<dbReference type="GO" id="GO:0005829">
    <property type="term" value="C:cytosol"/>
    <property type="evidence" value="ECO:0000318"/>
    <property type="project" value="GO_Central"/>
</dbReference>
<dbReference type="GO" id="GO:0004048">
    <property type="term" value="F:anthranilate phosphoribosyltransferase activity"/>
    <property type="evidence" value="ECO:0007669"/>
    <property type="project" value="UniProtKB-UniRule"/>
</dbReference>
<dbReference type="GO" id="GO:0000287">
    <property type="term" value="F:magnesium ion binding"/>
    <property type="evidence" value="ECO:0007669"/>
    <property type="project" value="UniProtKB-UniRule"/>
</dbReference>
<dbReference type="GO" id="GO:0000162">
    <property type="term" value="P:L-tryptophan biosynthetic process"/>
    <property type="evidence" value="ECO:0000318"/>
    <property type="project" value="GO_Central"/>
</dbReference>
<dbReference type="FunFam" id="1.20.970.10:FF:000003">
    <property type="entry name" value="Anthranilate phosphoribosyltransferase"/>
    <property type="match status" value="1"/>
</dbReference>
<dbReference type="FunFam" id="3.40.1030.10:FF:000002">
    <property type="entry name" value="Anthranilate phosphoribosyltransferase"/>
    <property type="match status" value="1"/>
</dbReference>
<dbReference type="Gene3D" id="3.40.1030.10">
    <property type="entry name" value="Nucleoside phosphorylase/phosphoribosyltransferase catalytic domain"/>
    <property type="match status" value="1"/>
</dbReference>
<dbReference type="Gene3D" id="1.20.970.10">
    <property type="entry name" value="Transferase, Pyrimidine Nucleoside Phosphorylase, Chain C"/>
    <property type="match status" value="1"/>
</dbReference>
<dbReference type="HAMAP" id="MF_00211">
    <property type="entry name" value="TrpD"/>
    <property type="match status" value="1"/>
</dbReference>
<dbReference type="InterPro" id="IPR005940">
    <property type="entry name" value="Anthranilate_Pribosyl_Tfrase"/>
</dbReference>
<dbReference type="InterPro" id="IPR000312">
    <property type="entry name" value="Glycosyl_Trfase_fam3"/>
</dbReference>
<dbReference type="InterPro" id="IPR017459">
    <property type="entry name" value="Glycosyl_Trfase_fam3_N_dom"/>
</dbReference>
<dbReference type="InterPro" id="IPR036320">
    <property type="entry name" value="Glycosyl_Trfase_fam3_N_dom_sf"/>
</dbReference>
<dbReference type="InterPro" id="IPR035902">
    <property type="entry name" value="Nuc_phospho_transferase"/>
</dbReference>
<dbReference type="NCBIfam" id="TIGR01245">
    <property type="entry name" value="trpD"/>
    <property type="match status" value="1"/>
</dbReference>
<dbReference type="PANTHER" id="PTHR43285">
    <property type="entry name" value="ANTHRANILATE PHOSPHORIBOSYLTRANSFERASE"/>
    <property type="match status" value="1"/>
</dbReference>
<dbReference type="PANTHER" id="PTHR43285:SF2">
    <property type="entry name" value="ANTHRANILATE PHOSPHORIBOSYLTRANSFERASE"/>
    <property type="match status" value="1"/>
</dbReference>
<dbReference type="Pfam" id="PF02885">
    <property type="entry name" value="Glycos_trans_3N"/>
    <property type="match status" value="1"/>
</dbReference>
<dbReference type="Pfam" id="PF00591">
    <property type="entry name" value="Glycos_transf_3"/>
    <property type="match status" value="1"/>
</dbReference>
<dbReference type="SUPFAM" id="SSF52418">
    <property type="entry name" value="Nucleoside phosphorylase/phosphoribosyltransferase catalytic domain"/>
    <property type="match status" value="1"/>
</dbReference>
<dbReference type="SUPFAM" id="SSF47648">
    <property type="entry name" value="Nucleoside phosphorylase/phosphoribosyltransferase N-terminal domain"/>
    <property type="match status" value="1"/>
</dbReference>
<accession>Q9KST4</accession>
<proteinExistence type="inferred from homology"/>